<comment type="function">
    <text>Transforms avian and murine macrophages and fibroblasts as well as murine B-lymphoid cells.</text>
</comment>
<comment type="subunit">
    <text>Efficient DNA binding requires dimerization with another bHLH protein.</text>
</comment>
<comment type="subcellular location">
    <subcellularLocation>
        <location evidence="1">Host nucleus</location>
    </subcellularLocation>
</comment>
<comment type="miscellaneous">
    <text>This protein is synthesized as a Gag-vMyc chimeric protein. The sequence shown here corresponds to the Myc homolog fragment of the chimera.</text>
</comment>
<comment type="sequence caution" evidence="4">
    <conflict type="erroneous initiation">
        <sequence resource="EMBL-CDS" id="AAA42408"/>
    </conflict>
</comment>
<reference key="1">
    <citation type="journal article" date="1986" name="Virology">
        <title>Nucleotide sequence of the CMII v-myc allele.</title>
        <authorList>
            <person name="Walther N."/>
            <person name="Jansen H.W."/>
            <person name="Trachmann C."/>
            <person name="Bister K."/>
        </authorList>
    </citation>
    <scope>NUCLEOTIDE SEQUENCE [GENOMIC RNA]</scope>
</reference>
<dbReference type="EMBL" id="M15241">
    <property type="protein sequence ID" value="AAA42408.1"/>
    <property type="status" value="ALT_INIT"/>
    <property type="molecule type" value="Genomic_RNA"/>
</dbReference>
<dbReference type="PIR" id="A24297">
    <property type="entry name" value="TVFV2C"/>
</dbReference>
<dbReference type="SMR" id="P10395"/>
<dbReference type="GO" id="GO:0042025">
    <property type="term" value="C:host cell nucleus"/>
    <property type="evidence" value="ECO:0007669"/>
    <property type="project" value="UniProtKB-SubCell"/>
</dbReference>
<dbReference type="GO" id="GO:0003677">
    <property type="term" value="F:DNA binding"/>
    <property type="evidence" value="ECO:0007669"/>
    <property type="project" value="UniProtKB-KW"/>
</dbReference>
<dbReference type="GO" id="GO:0003700">
    <property type="term" value="F:DNA-binding transcription factor activity"/>
    <property type="evidence" value="ECO:0007669"/>
    <property type="project" value="InterPro"/>
</dbReference>
<dbReference type="GO" id="GO:0046983">
    <property type="term" value="F:protein dimerization activity"/>
    <property type="evidence" value="ECO:0007669"/>
    <property type="project" value="InterPro"/>
</dbReference>
<dbReference type="CDD" id="cd11458">
    <property type="entry name" value="bHLHzip_c-Myc"/>
    <property type="match status" value="1"/>
</dbReference>
<dbReference type="FunFam" id="4.10.280.10:FF:000019">
    <property type="entry name" value="Myc proto-oncogene protein"/>
    <property type="match status" value="1"/>
</dbReference>
<dbReference type="Gene3D" id="4.10.280.10">
    <property type="entry name" value="Helix-loop-helix DNA-binding domain"/>
    <property type="match status" value="1"/>
</dbReference>
<dbReference type="InterPro" id="IPR011598">
    <property type="entry name" value="bHLH_dom"/>
</dbReference>
<dbReference type="InterPro" id="IPR036638">
    <property type="entry name" value="HLH_DNA-bd_sf"/>
</dbReference>
<dbReference type="InterPro" id="IPR003327">
    <property type="entry name" value="Myc-LZ"/>
</dbReference>
<dbReference type="InterPro" id="IPR050433">
    <property type="entry name" value="Myc_transcription_factors"/>
</dbReference>
<dbReference type="InterPro" id="IPR002418">
    <property type="entry name" value="Tscrpt_reg_Myc"/>
</dbReference>
<dbReference type="InterPro" id="IPR012682">
    <property type="entry name" value="Tscrpt_reg_Myc_N"/>
</dbReference>
<dbReference type="PANTHER" id="PTHR45851">
    <property type="entry name" value="MYC PROTO-ONCOGENE"/>
    <property type="match status" value="1"/>
</dbReference>
<dbReference type="Pfam" id="PF00010">
    <property type="entry name" value="HLH"/>
    <property type="match status" value="1"/>
</dbReference>
<dbReference type="Pfam" id="PF02344">
    <property type="entry name" value="Myc-LZ"/>
    <property type="match status" value="1"/>
</dbReference>
<dbReference type="Pfam" id="PF01056">
    <property type="entry name" value="Myc_N"/>
    <property type="match status" value="1"/>
</dbReference>
<dbReference type="PIRSF" id="PIRSF001705">
    <property type="entry name" value="Myc_protein"/>
    <property type="match status" value="1"/>
</dbReference>
<dbReference type="PRINTS" id="PR00044">
    <property type="entry name" value="LEUZIPPRMYC"/>
</dbReference>
<dbReference type="SMART" id="SM00353">
    <property type="entry name" value="HLH"/>
    <property type="match status" value="1"/>
</dbReference>
<dbReference type="SUPFAM" id="SSF47459">
    <property type="entry name" value="HLH, helix-loop-helix DNA-binding domain"/>
    <property type="match status" value="1"/>
</dbReference>
<dbReference type="PROSITE" id="PS50888">
    <property type="entry name" value="BHLH"/>
    <property type="match status" value="1"/>
</dbReference>
<feature type="chain" id="PRO_0000127307" description="Viral myc transforming protein">
    <location>
        <begin position="1"/>
        <end position="416"/>
    </location>
</feature>
<feature type="domain" description="bHLH" evidence="2">
    <location>
        <begin position="331"/>
        <end position="383"/>
    </location>
</feature>
<feature type="region of interest" description="Disordered" evidence="3">
    <location>
        <begin position="144"/>
        <end position="174"/>
    </location>
</feature>
<feature type="region of interest" description="Disordered" evidence="3">
    <location>
        <begin position="203"/>
        <end position="268"/>
    </location>
</feature>
<feature type="region of interest" description="Disordered" evidence="3">
    <location>
        <begin position="315"/>
        <end position="340"/>
    </location>
</feature>
<feature type="region of interest" description="Leucine-zipper">
    <location>
        <begin position="390"/>
        <end position="411"/>
    </location>
</feature>
<feature type="compositionally biased region" description="Pro residues" evidence="3">
    <location>
        <begin position="156"/>
        <end position="169"/>
    </location>
</feature>
<feature type="compositionally biased region" description="Low complexity" evidence="3">
    <location>
        <begin position="212"/>
        <end position="227"/>
    </location>
</feature>
<feature type="compositionally biased region" description="Acidic residues" evidence="3">
    <location>
        <begin position="228"/>
        <end position="240"/>
    </location>
</feature>
<feature type="compositionally biased region" description="Low complexity" evidence="3">
    <location>
        <begin position="245"/>
        <end position="259"/>
    </location>
</feature>
<feature type="compositionally biased region" description="Polar residues" evidence="3">
    <location>
        <begin position="315"/>
        <end position="324"/>
    </location>
</feature>
<sequence>MPLSASLPSKNYDYDYDSVQPYFYFEEEEENFYLAAQQRGSELQPPAPSEDIWKKFELLPTPPLSPSRRSSLAAASCFPSTADQLEMVTELLGGDMVNQSFICDPDDESFVKSIIIQDCMWSGFSAAAKLEKVVSEKLATYQASRREGGPAAASRPGPPPSGPPPPPAGPAASAGLYLHDLGAAAADCIDPSVVFPYPLSERAPRAAPPGANPAALLGVDTPPTTSSDSEEEQEEDEEIDVVTLAEANESESSTESSTEASEEHCKPHHSPLVLKRCHVNIHQHNYAAPPSTKVEYPAAKRLKLDSGRVLKQISNNRKCSSPRTSDSEENDKRRTHNVLERQRRNELKLSFFALRDQIPEVANNEKAPKVVILKKATEYVLSIQSDEHRLIAEKEQLRRRREQLKHKLEQLRNSRE</sequence>
<protein>
    <recommendedName>
        <fullName>Viral myc transforming protein</fullName>
        <shortName>v-Myc</shortName>
    </recommendedName>
</protein>
<keyword id="KW-0238">DNA-binding</keyword>
<keyword id="KW-1048">Host nucleus</keyword>
<keyword id="KW-0553">Oncogene</keyword>
<evidence type="ECO:0000250" key="1"/>
<evidence type="ECO:0000255" key="2">
    <source>
        <dbReference type="PROSITE-ProRule" id="PRU00981"/>
    </source>
</evidence>
<evidence type="ECO:0000256" key="3">
    <source>
        <dbReference type="SAM" id="MobiDB-lite"/>
    </source>
</evidence>
<evidence type="ECO:0000305" key="4"/>
<name>MYC_AVIM2</name>
<organism>
    <name type="scientific">Avian myelocytomatosis virus CMII</name>
    <dbReference type="NCBI Taxonomy" id="11869"/>
    <lineage>
        <taxon>Viruses</taxon>
        <taxon>Riboviria</taxon>
        <taxon>Pararnavirae</taxon>
        <taxon>Artverviricota</taxon>
        <taxon>Revtraviricetes</taxon>
        <taxon>Ortervirales</taxon>
        <taxon>Retroviridae</taxon>
        <taxon>Orthoretrovirinae</taxon>
        <taxon>Alpharetrovirus</taxon>
        <taxon>Avian myelocytomatosis virus</taxon>
    </lineage>
</organism>
<accession>P10395</accession>
<proteinExistence type="inferred from homology"/>
<gene>
    <name type="primary">MYC</name>
</gene>
<organismHost>
    <name type="scientific">Galliformes</name>
    <dbReference type="NCBI Taxonomy" id="8976"/>
</organismHost>